<accession>P65396</accession>
<accession>Q8YGA6</accession>
<proteinExistence type="inferred from homology"/>
<feature type="chain" id="PRO_0000163079" description="Molybdopterin synthase catalytic subunit">
    <location>
        <begin position="1"/>
        <end position="163"/>
    </location>
</feature>
<feature type="region of interest" description="Disordered" evidence="2">
    <location>
        <begin position="138"/>
        <end position="163"/>
    </location>
</feature>
<feature type="compositionally biased region" description="Basic and acidic residues" evidence="2">
    <location>
        <begin position="151"/>
        <end position="163"/>
    </location>
</feature>
<feature type="binding site" evidence="1">
    <location>
        <begin position="43"/>
        <end position="45"/>
    </location>
    <ligand>
        <name>substrate</name>
    </ligand>
</feature>
<feature type="binding site" evidence="1">
    <location>
        <begin position="107"/>
        <end position="108"/>
    </location>
    <ligand>
        <name>substrate</name>
    </ligand>
</feature>
<feature type="binding site" evidence="1">
    <location>
        <position position="123"/>
    </location>
    <ligand>
        <name>substrate</name>
    </ligand>
</feature>
<feature type="binding site" evidence="1">
    <location>
        <begin position="130"/>
        <end position="132"/>
    </location>
    <ligand>
        <name>substrate</name>
    </ligand>
</feature>
<evidence type="ECO:0000250" key="1"/>
<evidence type="ECO:0000256" key="2">
    <source>
        <dbReference type="SAM" id="MobiDB-lite"/>
    </source>
</evidence>
<evidence type="ECO:0000305" key="3"/>
<name>MOAE_BRUME</name>
<gene>
    <name type="primary">moaE</name>
    <name type="ordered locus">BMEI1254</name>
</gene>
<keyword id="KW-0501">Molybdenum cofactor biosynthesis</keyword>
<keyword id="KW-0808">Transferase</keyword>
<comment type="function">
    <text evidence="1">Converts molybdopterin precursor Z into molybdopterin. This requires the incorporation of two sulfur atoms into precursor Z to generate a dithiolene group. The sulfur is provided by MoaD (By similarity).</text>
</comment>
<comment type="catalytic activity">
    <reaction>
        <text>2 [molybdopterin-synthase sulfur-carrier protein]-C-terminal-Gly-aminoethanethioate + cyclic pyranopterin phosphate + H2O = molybdopterin + 2 [molybdopterin-synthase sulfur-carrier protein]-C-terminal Gly-Gly + 2 H(+)</text>
        <dbReference type="Rhea" id="RHEA:26333"/>
        <dbReference type="Rhea" id="RHEA-COMP:12202"/>
        <dbReference type="Rhea" id="RHEA-COMP:19907"/>
        <dbReference type="ChEBI" id="CHEBI:15377"/>
        <dbReference type="ChEBI" id="CHEBI:15378"/>
        <dbReference type="ChEBI" id="CHEBI:58698"/>
        <dbReference type="ChEBI" id="CHEBI:59648"/>
        <dbReference type="ChEBI" id="CHEBI:90778"/>
        <dbReference type="ChEBI" id="CHEBI:232372"/>
        <dbReference type="EC" id="2.8.1.12"/>
    </reaction>
</comment>
<comment type="pathway">
    <text>Cofactor biosynthesis; molybdopterin biosynthesis.</text>
</comment>
<comment type="subunit">
    <text evidence="1">Heterotetramer of 2 MoaD subunits and 2 MoaE subunits. Also stable as homodimer. The enzyme changes between these two forms during catalysis (By similarity).</text>
</comment>
<comment type="similarity">
    <text evidence="3">Belongs to the MoaE family.</text>
</comment>
<protein>
    <recommendedName>
        <fullName>Molybdopterin synthase catalytic subunit</fullName>
        <ecNumber>2.8.1.12</ecNumber>
    </recommendedName>
    <alternativeName>
        <fullName>MPT synthase subunit 2</fullName>
    </alternativeName>
    <alternativeName>
        <fullName>Molybdenum cofactor biosynthesis protein E</fullName>
    </alternativeName>
    <alternativeName>
        <fullName>Molybdopterin-converting factor large subunit</fullName>
    </alternativeName>
    <alternativeName>
        <fullName>Molybdopterin-converting factor subunit 2</fullName>
    </alternativeName>
</protein>
<reference key="1">
    <citation type="journal article" date="2002" name="Proc. Natl. Acad. Sci. U.S.A.">
        <title>The genome sequence of the facultative intracellular pathogen Brucella melitensis.</title>
        <authorList>
            <person name="DelVecchio V.G."/>
            <person name="Kapatral V."/>
            <person name="Redkar R.J."/>
            <person name="Patra G."/>
            <person name="Mujer C."/>
            <person name="Los T."/>
            <person name="Ivanova N."/>
            <person name="Anderson I."/>
            <person name="Bhattacharyya A."/>
            <person name="Lykidis A."/>
            <person name="Reznik G."/>
            <person name="Jablonski L."/>
            <person name="Larsen N."/>
            <person name="D'Souza M."/>
            <person name="Bernal A."/>
            <person name="Mazur M."/>
            <person name="Goltsman E."/>
            <person name="Selkov E."/>
            <person name="Elzer P.H."/>
            <person name="Hagius S."/>
            <person name="O'Callaghan D."/>
            <person name="Letesson J.-J."/>
            <person name="Haselkorn R."/>
            <person name="Kyrpides N.C."/>
            <person name="Overbeek R."/>
        </authorList>
    </citation>
    <scope>NUCLEOTIDE SEQUENCE [LARGE SCALE GENOMIC DNA]</scope>
    <source>
        <strain>ATCC 23456 / CCUG 17765 / NCTC 10094 / 16M</strain>
    </source>
</reference>
<dbReference type="EC" id="2.8.1.12"/>
<dbReference type="EMBL" id="AE008917">
    <property type="protein sequence ID" value="AAL52435.1"/>
    <property type="molecule type" value="Genomic_DNA"/>
</dbReference>
<dbReference type="PIR" id="AH3408">
    <property type="entry name" value="AH3408"/>
</dbReference>
<dbReference type="RefSeq" id="WP_002963838.1">
    <property type="nucleotide sequence ID" value="NZ_GG703778.1"/>
</dbReference>
<dbReference type="SMR" id="P65396"/>
<dbReference type="KEGG" id="bme:BMEI1254"/>
<dbReference type="KEGG" id="bmel:DK63_151"/>
<dbReference type="PATRIC" id="fig|224914.52.peg.157"/>
<dbReference type="eggNOG" id="COG0314">
    <property type="taxonomic scope" value="Bacteria"/>
</dbReference>
<dbReference type="PhylomeDB" id="P65396"/>
<dbReference type="UniPathway" id="UPA00344"/>
<dbReference type="Proteomes" id="UP000000419">
    <property type="component" value="Chromosome I"/>
</dbReference>
<dbReference type="GO" id="GO:0030366">
    <property type="term" value="F:molybdopterin synthase activity"/>
    <property type="evidence" value="ECO:0007669"/>
    <property type="project" value="UniProtKB-EC"/>
</dbReference>
<dbReference type="GO" id="GO:0006777">
    <property type="term" value="P:Mo-molybdopterin cofactor biosynthetic process"/>
    <property type="evidence" value="ECO:0007669"/>
    <property type="project" value="UniProtKB-KW"/>
</dbReference>
<dbReference type="CDD" id="cd00756">
    <property type="entry name" value="MoaE"/>
    <property type="match status" value="1"/>
</dbReference>
<dbReference type="Gene3D" id="3.90.1170.40">
    <property type="entry name" value="Molybdopterin biosynthesis MoaE subunit"/>
    <property type="match status" value="1"/>
</dbReference>
<dbReference type="InterPro" id="IPR036563">
    <property type="entry name" value="MoaE_sf"/>
</dbReference>
<dbReference type="InterPro" id="IPR003448">
    <property type="entry name" value="Mopterin_biosynth_MoaE"/>
</dbReference>
<dbReference type="PANTHER" id="PTHR23404">
    <property type="entry name" value="MOLYBDOPTERIN SYNTHASE RELATED"/>
    <property type="match status" value="1"/>
</dbReference>
<dbReference type="Pfam" id="PF02391">
    <property type="entry name" value="MoaE"/>
    <property type="match status" value="1"/>
</dbReference>
<dbReference type="SUPFAM" id="SSF54690">
    <property type="entry name" value="Molybdopterin synthase subunit MoaE"/>
    <property type="match status" value="1"/>
</dbReference>
<sequence length="163" mass="18396">MDGQPTCPLSISVRSEDFDIAAEIDRIGKNRREIGAIVTFTGLCRDEDGQLAALELEHYPGMAQAEISRMAKQALERWPLNGLTIIHRYGLIKPGENIVLVVAASRHRHAAFEAASFLMDYMKTNAPFWKREHLADGTAGGWVSSKEEDEESRKRWEEPRKSE</sequence>
<organism>
    <name type="scientific">Brucella melitensis biotype 1 (strain ATCC 23456 / CCUG 17765 / NCTC 10094 / 16M)</name>
    <dbReference type="NCBI Taxonomy" id="224914"/>
    <lineage>
        <taxon>Bacteria</taxon>
        <taxon>Pseudomonadati</taxon>
        <taxon>Pseudomonadota</taxon>
        <taxon>Alphaproteobacteria</taxon>
        <taxon>Hyphomicrobiales</taxon>
        <taxon>Brucellaceae</taxon>
        <taxon>Brucella/Ochrobactrum group</taxon>
        <taxon>Brucella</taxon>
    </lineage>
</organism>